<feature type="chain" id="PRO_0000334680" description="Peroxisomal biogenesis factor 39">
    <location>
        <begin position="1"/>
        <end position="101"/>
    </location>
</feature>
<accession>Q5I0X4</accession>
<reference key="1">
    <citation type="journal article" date="2004" name="Genome Res.">
        <title>The status, quality, and expansion of the NIH full-length cDNA project: the Mammalian Gene Collection (MGC).</title>
        <authorList>
            <consortium name="The MGC Project Team"/>
        </authorList>
    </citation>
    <scope>NUCLEOTIDE SEQUENCE [LARGE SCALE MRNA]</scope>
    <source>
        <tissue>Bone</tissue>
        <tissue>Salivary gland</tissue>
    </source>
</reference>
<reference key="2">
    <citation type="journal article" date="2023" name="Histochem. Cell Biol.">
        <title>Peroxisomes: novel findings and future directions.</title>
        <authorList>
            <person name="Pedrosa A.G."/>
            <person name="Reglinski K."/>
            <person name="Lismont C."/>
            <person name="Kors S."/>
            <person name="Costello J."/>
            <person name="Rodrigues T.A."/>
            <person name="Marques M."/>
            <person name="Linka N."/>
            <person name="Argyriou C."/>
            <person name="Weinhofer I."/>
            <person name="Kocherlakota S."/>
            <person name="Riccio V."/>
            <person name="Ferreira V."/>
            <person name="Di Cara F."/>
            <person name="Ferreira A.R."/>
            <person name="Francisco T."/>
            <person name="Azevedo J.E."/>
            <person name="Ribeiro D."/>
        </authorList>
    </citation>
    <scope>FUNCTION</scope>
    <scope>SUBCELLULAR LOCATION</scope>
</reference>
<evidence type="ECO:0000305" key="1"/>
<evidence type="ECO:0000305" key="2">
    <source>
    </source>
</evidence>
<evidence type="ECO:0000312" key="3">
    <source>
        <dbReference type="HGNC" id="HGNC:34431"/>
    </source>
</evidence>
<sequence>MERPRSPQCSAPASASASVTLAQLLQLVQQGQELPGLEKRHIAAIHGEPTASRLPRRPKPWEAAALAESLPPPTLRIGTAPAEPGLVEAATAPSSWHTVGP</sequence>
<organism>
    <name type="scientific">Homo sapiens</name>
    <name type="common">Human</name>
    <dbReference type="NCBI Taxonomy" id="9606"/>
    <lineage>
        <taxon>Eukaryota</taxon>
        <taxon>Metazoa</taxon>
        <taxon>Chordata</taxon>
        <taxon>Craniata</taxon>
        <taxon>Vertebrata</taxon>
        <taxon>Euteleostomi</taxon>
        <taxon>Mammalia</taxon>
        <taxon>Eutheria</taxon>
        <taxon>Euarchontoglires</taxon>
        <taxon>Primates</taxon>
        <taxon>Haplorrhini</taxon>
        <taxon>Catarrhini</taxon>
        <taxon>Hominidae</taxon>
        <taxon>Homo</taxon>
    </lineage>
</organism>
<gene>
    <name evidence="3" type="primary">PEX39</name>
    <name type="synonym">C6orf226</name>
</gene>
<comment type="function">
    <text evidence="2">May be a peroxin involved in the PTS2-mediated protein import pathway.</text>
</comment>
<comment type="interaction">
    <interactant intactId="EBI-10244057">
        <id>Q5I0X4</id>
    </interactant>
    <interactant intactId="EBI-743771">
        <id>Q92624</id>
        <label>APPBP2</label>
    </interactant>
    <organismsDiffer>false</organismsDiffer>
    <experiments>6</experiments>
</comment>
<comment type="interaction">
    <interactant intactId="EBI-10244057">
        <id>Q5I0X4</id>
    </interactant>
    <interactant intactId="EBI-748961">
        <id>O95273</id>
        <label>CCNDBP1</label>
    </interactant>
    <organismsDiffer>false</organismsDiffer>
    <experiments>4</experiments>
</comment>
<comment type="interaction">
    <interactant intactId="EBI-10244057">
        <id>Q5I0X4</id>
    </interactant>
    <interactant intactId="EBI-304185">
        <id>P61978</id>
        <label>HNRNPK</label>
    </interactant>
    <organismsDiffer>false</organismsDiffer>
    <experiments>7</experiments>
</comment>
<comment type="interaction">
    <interactant intactId="EBI-10244057">
        <id>Q5I0X4</id>
    </interactant>
    <interactant intactId="EBI-10171697">
        <id>Q6A162</id>
        <label>KRT40</label>
    </interactant>
    <organismsDiffer>false</organismsDiffer>
    <experiments>3</experiments>
</comment>
<comment type="interaction">
    <interactant intactId="EBI-10244057">
        <id>Q5I0X4</id>
    </interactant>
    <interactant intactId="EBI-742397">
        <id>Q8IYF3</id>
        <label>TEX11</label>
    </interactant>
    <organismsDiffer>false</organismsDiffer>
    <experiments>3</experiments>
</comment>
<comment type="subcellular location">
    <subcellularLocation>
        <location evidence="2">Peroxisome</location>
    </subcellularLocation>
</comment>
<keyword id="KW-0576">Peroxisome</keyword>
<keyword id="KW-1267">Proteomics identification</keyword>
<keyword id="KW-1185">Reference proteome</keyword>
<protein>
    <recommendedName>
        <fullName evidence="1">Peroxisomal biogenesis factor 39</fullName>
    </recommendedName>
</protein>
<dbReference type="EMBL" id="BC060325">
    <property type="protein sequence ID" value="AAH60325.1"/>
    <property type="molecule type" value="mRNA"/>
</dbReference>
<dbReference type="EMBL" id="BC073804">
    <property type="protein sequence ID" value="AAH73804.1"/>
    <property type="molecule type" value="mRNA"/>
</dbReference>
<dbReference type="EMBL" id="BC094854">
    <property type="protein sequence ID" value="AAH94854.1"/>
    <property type="molecule type" value="mRNA"/>
</dbReference>
<dbReference type="CCDS" id="CCDS43463.1"/>
<dbReference type="RefSeq" id="NP_001008739.1">
    <property type="nucleotide sequence ID" value="NM_001008739.2"/>
</dbReference>
<dbReference type="BioGRID" id="137211">
    <property type="interactions" value="10"/>
</dbReference>
<dbReference type="FunCoup" id="Q5I0X4">
    <property type="interactions" value="8"/>
</dbReference>
<dbReference type="IntAct" id="Q5I0X4">
    <property type="interactions" value="8"/>
</dbReference>
<dbReference type="STRING" id="9606.ENSP00000386146"/>
<dbReference type="iPTMnet" id="Q5I0X4"/>
<dbReference type="PhosphoSitePlus" id="Q5I0X4"/>
<dbReference type="BioMuta" id="C6orf226"/>
<dbReference type="MassIVE" id="Q5I0X4"/>
<dbReference type="PaxDb" id="9606-ENSP00000386146"/>
<dbReference type="PeptideAtlas" id="Q5I0X4"/>
<dbReference type="ProteomicsDB" id="62969"/>
<dbReference type="Antibodypedia" id="49014">
    <property type="antibodies" value="27 antibodies from 6 providers"/>
</dbReference>
<dbReference type="DNASU" id="441150"/>
<dbReference type="Ensembl" id="ENST00000408925.4">
    <property type="protein sequence ID" value="ENSP00000386146.2"/>
    <property type="gene ID" value="ENSG00000221821.4"/>
</dbReference>
<dbReference type="GeneID" id="441150"/>
<dbReference type="KEGG" id="hsa:441150"/>
<dbReference type="MANE-Select" id="ENST00000408925.4">
    <property type="protein sequence ID" value="ENSP00000386146.2"/>
    <property type="RefSeq nucleotide sequence ID" value="NM_001008739.2"/>
    <property type="RefSeq protein sequence ID" value="NP_001008739.1"/>
</dbReference>
<dbReference type="UCSC" id="uc003osw.3">
    <property type="organism name" value="human"/>
</dbReference>
<dbReference type="AGR" id="HGNC:34431"/>
<dbReference type="CTD" id="441150"/>
<dbReference type="GeneCards" id="PEX39"/>
<dbReference type="HGNC" id="HGNC:34431">
    <property type="gene designation" value="PEX39"/>
</dbReference>
<dbReference type="HPA" id="ENSG00000221821">
    <property type="expression patterns" value="Low tissue specificity"/>
</dbReference>
<dbReference type="neXtProt" id="NX_Q5I0X4"/>
<dbReference type="OpenTargets" id="ENSG00000221821"/>
<dbReference type="PharmGKB" id="PA164717364"/>
<dbReference type="VEuPathDB" id="HostDB:ENSG00000221821"/>
<dbReference type="eggNOG" id="ENOG502SFN3">
    <property type="taxonomic scope" value="Eukaryota"/>
</dbReference>
<dbReference type="GeneTree" id="ENSGT00440000034488"/>
<dbReference type="HOGENOM" id="CLU_2262894_0_0_1"/>
<dbReference type="InParanoid" id="Q5I0X4"/>
<dbReference type="OMA" id="MEPLACR"/>
<dbReference type="PAN-GO" id="Q5I0X4">
    <property type="GO annotations" value="0 GO annotations based on evolutionary models"/>
</dbReference>
<dbReference type="PhylomeDB" id="Q5I0X4"/>
<dbReference type="TreeFam" id="TF339789"/>
<dbReference type="PathwayCommons" id="Q5I0X4"/>
<dbReference type="SignaLink" id="Q5I0X4"/>
<dbReference type="BioGRID-ORCS" id="441150">
    <property type="hits" value="28 hits in 1132 CRISPR screens"/>
</dbReference>
<dbReference type="GenomeRNAi" id="441150"/>
<dbReference type="Pharos" id="Q5I0X4">
    <property type="development level" value="Tdark"/>
</dbReference>
<dbReference type="PRO" id="PR:Q5I0X4"/>
<dbReference type="Proteomes" id="UP000005640">
    <property type="component" value="Chromosome 6"/>
</dbReference>
<dbReference type="RNAct" id="Q5I0X4">
    <property type="molecule type" value="protein"/>
</dbReference>
<dbReference type="Bgee" id="ENSG00000221821">
    <property type="expression patterns" value="Expressed in right adrenal gland and 139 other cell types or tissues"/>
</dbReference>
<dbReference type="GO" id="GO:0005777">
    <property type="term" value="C:peroxisome"/>
    <property type="evidence" value="ECO:0007669"/>
    <property type="project" value="UniProtKB-SubCell"/>
</dbReference>
<dbReference type="InterPro" id="IPR040554">
    <property type="entry name" value="KPWE_PEX14_dom"/>
</dbReference>
<dbReference type="InterPro" id="IPR039995">
    <property type="entry name" value="PEX39"/>
</dbReference>
<dbReference type="PANTHER" id="PTHR40657">
    <property type="entry name" value="HYPOTHETICAL PROTEIN LOC681367"/>
    <property type="match status" value="1"/>
</dbReference>
<dbReference type="PANTHER" id="PTHR40657:SF1">
    <property type="entry name" value="RIKEN CDNA 2310039H08 GENE"/>
    <property type="match status" value="1"/>
</dbReference>
<dbReference type="Pfam" id="PF17733">
    <property type="entry name" value="KPWE_dom"/>
    <property type="match status" value="1"/>
</dbReference>
<name>PEX39_HUMAN</name>
<proteinExistence type="evidence at protein level"/>